<reference key="1">
    <citation type="submission" date="2008-05" db="EMBL/GenBank/DDBJ databases">
        <title>Complete sequence of Chlorobium limicola DSM 245.</title>
        <authorList>
            <consortium name="US DOE Joint Genome Institute"/>
            <person name="Lucas S."/>
            <person name="Copeland A."/>
            <person name="Lapidus A."/>
            <person name="Glavina del Rio T."/>
            <person name="Dalin E."/>
            <person name="Tice H."/>
            <person name="Bruce D."/>
            <person name="Goodwin L."/>
            <person name="Pitluck S."/>
            <person name="Schmutz J."/>
            <person name="Larimer F."/>
            <person name="Land M."/>
            <person name="Hauser L."/>
            <person name="Kyrpides N."/>
            <person name="Ovchinnikova G."/>
            <person name="Zhao F."/>
            <person name="Li T."/>
            <person name="Liu Z."/>
            <person name="Overmann J."/>
            <person name="Bryant D.A."/>
            <person name="Richardson P."/>
        </authorList>
    </citation>
    <scope>NUCLEOTIDE SEQUENCE [LARGE SCALE GENOMIC DNA]</scope>
    <source>
        <strain>DSM 245 / NBRC 103803 / 6330</strain>
    </source>
</reference>
<name>GATA_CHLL2</name>
<organism>
    <name type="scientific">Chlorobium limicola (strain DSM 245 / NBRC 103803 / 6330)</name>
    <dbReference type="NCBI Taxonomy" id="290315"/>
    <lineage>
        <taxon>Bacteria</taxon>
        <taxon>Pseudomonadati</taxon>
        <taxon>Chlorobiota</taxon>
        <taxon>Chlorobiia</taxon>
        <taxon>Chlorobiales</taxon>
        <taxon>Chlorobiaceae</taxon>
        <taxon>Chlorobium/Pelodictyon group</taxon>
        <taxon>Chlorobium</taxon>
    </lineage>
</organism>
<protein>
    <recommendedName>
        <fullName evidence="1">Glutamyl-tRNA(Gln) amidotransferase subunit A</fullName>
        <shortName evidence="1">Glu-ADT subunit A</shortName>
        <ecNumber evidence="1">6.3.5.7</ecNumber>
    </recommendedName>
</protein>
<proteinExistence type="inferred from homology"/>
<accession>B3EFE2</accession>
<feature type="chain" id="PRO_1000095118" description="Glutamyl-tRNA(Gln) amidotransferase subunit A">
    <location>
        <begin position="1"/>
        <end position="474"/>
    </location>
</feature>
<feature type="active site" description="Charge relay system" evidence="1">
    <location>
        <position position="76"/>
    </location>
</feature>
<feature type="active site" description="Charge relay system" evidence="1">
    <location>
        <position position="151"/>
    </location>
</feature>
<feature type="active site" description="Acyl-ester intermediate" evidence="1">
    <location>
        <position position="175"/>
    </location>
</feature>
<gene>
    <name evidence="1" type="primary">gatA</name>
    <name type="ordered locus">Clim_0332</name>
</gene>
<sequence length="474" mass="51962">MQLSSYQDLRSELISRRITCEKVVLDYLERIDRHRDDNIYITVFHEQAVEKARKLDKKLSEGGLPGKLFGMPMAIKDNISIKGAGLTCASRILENYESVYDATAVQRLEAEDAVFLGKTNMDEFAMGSSNENSAFGAVPNPFDKTRVPGGSSGGSAAAVAAGLALAALGSDTGGSVRQPAGFCDIVGLKPTYGRISRYGLVAFASSFDQIGVLARNCDDASLVLGIMAGKDEHDATSSHRDVPDYAADMAAVRVEGLKIGVPKEYFHESLNREVGEIVRAKLHELRDKGAELVDITLPESDYAIAAYYILVTAEASSNLARFDGARYGYRSSRAEDVLAMYVNSRTEGFGKEVKRRIMLGTYVLSAGYYDTYYKKAQQVRRVFQDRYREALEKVDVIAGPTSPFPPFSIGEKMDDPLEMYLADVFTVPASIVGMPAVSVPVGMDSRNLPVGMHLICDFFEEGKLMGIARHLQRR</sequence>
<evidence type="ECO:0000255" key="1">
    <source>
        <dbReference type="HAMAP-Rule" id="MF_00120"/>
    </source>
</evidence>
<comment type="function">
    <text evidence="1">Allows the formation of correctly charged Gln-tRNA(Gln) through the transamidation of misacylated Glu-tRNA(Gln) in organisms which lack glutaminyl-tRNA synthetase. The reaction takes place in the presence of glutamine and ATP through an activated gamma-phospho-Glu-tRNA(Gln).</text>
</comment>
<comment type="catalytic activity">
    <reaction evidence="1">
        <text>L-glutamyl-tRNA(Gln) + L-glutamine + ATP + H2O = L-glutaminyl-tRNA(Gln) + L-glutamate + ADP + phosphate + H(+)</text>
        <dbReference type="Rhea" id="RHEA:17521"/>
        <dbReference type="Rhea" id="RHEA-COMP:9681"/>
        <dbReference type="Rhea" id="RHEA-COMP:9684"/>
        <dbReference type="ChEBI" id="CHEBI:15377"/>
        <dbReference type="ChEBI" id="CHEBI:15378"/>
        <dbReference type="ChEBI" id="CHEBI:29985"/>
        <dbReference type="ChEBI" id="CHEBI:30616"/>
        <dbReference type="ChEBI" id="CHEBI:43474"/>
        <dbReference type="ChEBI" id="CHEBI:58359"/>
        <dbReference type="ChEBI" id="CHEBI:78520"/>
        <dbReference type="ChEBI" id="CHEBI:78521"/>
        <dbReference type="ChEBI" id="CHEBI:456216"/>
        <dbReference type="EC" id="6.3.5.7"/>
    </reaction>
</comment>
<comment type="subunit">
    <text evidence="1">Heterotrimer of A, B and C subunits.</text>
</comment>
<comment type="similarity">
    <text evidence="1">Belongs to the amidase family. GatA subfamily.</text>
</comment>
<keyword id="KW-0067">ATP-binding</keyword>
<keyword id="KW-0436">Ligase</keyword>
<keyword id="KW-0547">Nucleotide-binding</keyword>
<keyword id="KW-0648">Protein biosynthesis</keyword>
<dbReference type="EC" id="6.3.5.7" evidence="1"/>
<dbReference type="EMBL" id="CP001097">
    <property type="protein sequence ID" value="ACD89425.1"/>
    <property type="molecule type" value="Genomic_DNA"/>
</dbReference>
<dbReference type="RefSeq" id="WP_012465306.1">
    <property type="nucleotide sequence ID" value="NC_010803.1"/>
</dbReference>
<dbReference type="SMR" id="B3EFE2"/>
<dbReference type="STRING" id="290315.Clim_0332"/>
<dbReference type="KEGG" id="cli:Clim_0332"/>
<dbReference type="eggNOG" id="COG0154">
    <property type="taxonomic scope" value="Bacteria"/>
</dbReference>
<dbReference type="HOGENOM" id="CLU_009600_0_3_10"/>
<dbReference type="OrthoDB" id="9811471at2"/>
<dbReference type="Proteomes" id="UP000008841">
    <property type="component" value="Chromosome"/>
</dbReference>
<dbReference type="GO" id="GO:0030956">
    <property type="term" value="C:glutamyl-tRNA(Gln) amidotransferase complex"/>
    <property type="evidence" value="ECO:0007669"/>
    <property type="project" value="InterPro"/>
</dbReference>
<dbReference type="GO" id="GO:0005524">
    <property type="term" value="F:ATP binding"/>
    <property type="evidence" value="ECO:0007669"/>
    <property type="project" value="UniProtKB-KW"/>
</dbReference>
<dbReference type="GO" id="GO:0050567">
    <property type="term" value="F:glutaminyl-tRNA synthase (glutamine-hydrolyzing) activity"/>
    <property type="evidence" value="ECO:0007669"/>
    <property type="project" value="UniProtKB-UniRule"/>
</dbReference>
<dbReference type="GO" id="GO:0006412">
    <property type="term" value="P:translation"/>
    <property type="evidence" value="ECO:0007669"/>
    <property type="project" value="UniProtKB-UniRule"/>
</dbReference>
<dbReference type="Gene3D" id="3.90.1300.10">
    <property type="entry name" value="Amidase signature (AS) domain"/>
    <property type="match status" value="1"/>
</dbReference>
<dbReference type="HAMAP" id="MF_00120">
    <property type="entry name" value="GatA"/>
    <property type="match status" value="1"/>
</dbReference>
<dbReference type="InterPro" id="IPR000120">
    <property type="entry name" value="Amidase"/>
</dbReference>
<dbReference type="InterPro" id="IPR020556">
    <property type="entry name" value="Amidase_CS"/>
</dbReference>
<dbReference type="InterPro" id="IPR023631">
    <property type="entry name" value="Amidase_dom"/>
</dbReference>
<dbReference type="InterPro" id="IPR036928">
    <property type="entry name" value="AS_sf"/>
</dbReference>
<dbReference type="InterPro" id="IPR004412">
    <property type="entry name" value="GatA"/>
</dbReference>
<dbReference type="NCBIfam" id="TIGR00132">
    <property type="entry name" value="gatA"/>
    <property type="match status" value="1"/>
</dbReference>
<dbReference type="PANTHER" id="PTHR11895:SF151">
    <property type="entry name" value="GLUTAMYL-TRNA(GLN) AMIDOTRANSFERASE SUBUNIT A"/>
    <property type="match status" value="1"/>
</dbReference>
<dbReference type="PANTHER" id="PTHR11895">
    <property type="entry name" value="TRANSAMIDASE"/>
    <property type="match status" value="1"/>
</dbReference>
<dbReference type="Pfam" id="PF01425">
    <property type="entry name" value="Amidase"/>
    <property type="match status" value="1"/>
</dbReference>
<dbReference type="SUPFAM" id="SSF75304">
    <property type="entry name" value="Amidase signature (AS) enzymes"/>
    <property type="match status" value="1"/>
</dbReference>
<dbReference type="PROSITE" id="PS00571">
    <property type="entry name" value="AMIDASES"/>
    <property type="match status" value="1"/>
</dbReference>